<evidence type="ECO:0000250" key="1"/>
<evidence type="ECO:0000305" key="2"/>
<accession>P0A2F4</accession>
<accession>P40726</accession>
<comment type="function">
    <text>Destroys superoxide anion radicals which are normally produced within the cells and which are toxic to biological systems.</text>
</comment>
<comment type="catalytic activity">
    <reaction>
        <text>2 superoxide + 2 H(+) = H2O2 + O2</text>
        <dbReference type="Rhea" id="RHEA:20696"/>
        <dbReference type="ChEBI" id="CHEBI:15378"/>
        <dbReference type="ChEBI" id="CHEBI:15379"/>
        <dbReference type="ChEBI" id="CHEBI:16240"/>
        <dbReference type="ChEBI" id="CHEBI:18421"/>
        <dbReference type="EC" id="1.15.1.1"/>
    </reaction>
</comment>
<comment type="cofactor">
    <cofactor evidence="1">
        <name>Fe cation</name>
        <dbReference type="ChEBI" id="CHEBI:24875"/>
    </cofactor>
    <text evidence="1">Binds 1 Fe cation per subunit.</text>
</comment>
<comment type="subunit">
    <text>Homodimer.</text>
</comment>
<comment type="similarity">
    <text evidence="2">Belongs to the iron/manganese superoxide dismutase family.</text>
</comment>
<name>SODF_SALTY</name>
<keyword id="KW-0408">Iron</keyword>
<keyword id="KW-0479">Metal-binding</keyword>
<keyword id="KW-0560">Oxidoreductase</keyword>
<keyword id="KW-1185">Reference proteome</keyword>
<proteinExistence type="inferred from homology"/>
<sequence length="193" mass="21308">MSFELPALPYAKDALAPHISAETLEYHYGKHHQTYVTNLNNLIKGTAFEGKSLEEIVRTSEGGIFNNAAQVWNHTFYWNCLAPNAGGEPTGKLADAIAASFGSFAEFKAQFTDAAIKNFGSGWTWLVKSADGKLAIVSTSNAGTPLTTDATPLLTVDVWEHAYYIDYRNARPNYLEHFWALVNWEFVAKNLAA</sequence>
<gene>
    <name type="primary">sodB</name>
    <name type="ordered locus">STM1431</name>
</gene>
<dbReference type="EC" id="1.15.1.1"/>
<dbReference type="EMBL" id="AE006468">
    <property type="protein sequence ID" value="AAL20353.1"/>
    <property type="molecule type" value="Genomic_DNA"/>
</dbReference>
<dbReference type="EMBL" id="U09502">
    <property type="protein sequence ID" value="AAA56997.1"/>
    <property type="molecule type" value="Unassigned_DNA"/>
</dbReference>
<dbReference type="RefSeq" id="NP_460394.1">
    <property type="nucleotide sequence ID" value="NC_003197.2"/>
</dbReference>
<dbReference type="RefSeq" id="WP_000007299.1">
    <property type="nucleotide sequence ID" value="NC_003197.2"/>
</dbReference>
<dbReference type="SMR" id="P0A2F4"/>
<dbReference type="STRING" id="99287.STM1431"/>
<dbReference type="PaxDb" id="99287-STM1431"/>
<dbReference type="GeneID" id="1252949"/>
<dbReference type="KEGG" id="stm:STM1431"/>
<dbReference type="PATRIC" id="fig|99287.12.peg.1514"/>
<dbReference type="HOGENOM" id="CLU_031625_0_0_6"/>
<dbReference type="PhylomeDB" id="P0A2F4"/>
<dbReference type="BioCyc" id="SENT99287:STM1431-MONOMER"/>
<dbReference type="PHI-base" id="PHI:11377"/>
<dbReference type="Proteomes" id="UP000001014">
    <property type="component" value="Chromosome"/>
</dbReference>
<dbReference type="GO" id="GO:0046872">
    <property type="term" value="F:metal ion binding"/>
    <property type="evidence" value="ECO:0007669"/>
    <property type="project" value="UniProtKB-KW"/>
</dbReference>
<dbReference type="GO" id="GO:0004784">
    <property type="term" value="F:superoxide dismutase activity"/>
    <property type="evidence" value="ECO:0007669"/>
    <property type="project" value="UniProtKB-EC"/>
</dbReference>
<dbReference type="FunFam" id="1.10.287.990:FF:000002">
    <property type="entry name" value="Superoxide dismutase"/>
    <property type="match status" value="1"/>
</dbReference>
<dbReference type="FunFam" id="3.55.40.20:FF:000001">
    <property type="entry name" value="Superoxide dismutase"/>
    <property type="match status" value="1"/>
</dbReference>
<dbReference type="Gene3D" id="1.10.287.990">
    <property type="entry name" value="Fe,Mn superoxide dismutase (SOD) domain"/>
    <property type="match status" value="1"/>
</dbReference>
<dbReference type="Gene3D" id="3.55.40.20">
    <property type="entry name" value="Iron/manganese superoxide dismutase, C-terminal domain"/>
    <property type="match status" value="1"/>
</dbReference>
<dbReference type="InterPro" id="IPR001189">
    <property type="entry name" value="Mn/Fe_SOD"/>
</dbReference>
<dbReference type="InterPro" id="IPR019833">
    <property type="entry name" value="Mn/Fe_SOD_BS"/>
</dbReference>
<dbReference type="InterPro" id="IPR019832">
    <property type="entry name" value="Mn/Fe_SOD_C"/>
</dbReference>
<dbReference type="InterPro" id="IPR019831">
    <property type="entry name" value="Mn/Fe_SOD_N"/>
</dbReference>
<dbReference type="InterPro" id="IPR036324">
    <property type="entry name" value="Mn/Fe_SOD_N_sf"/>
</dbReference>
<dbReference type="InterPro" id="IPR036314">
    <property type="entry name" value="SOD_C_sf"/>
</dbReference>
<dbReference type="NCBIfam" id="NF007832">
    <property type="entry name" value="PRK10543.1"/>
    <property type="match status" value="1"/>
</dbReference>
<dbReference type="PANTHER" id="PTHR42769">
    <property type="entry name" value="SUPEROXIDE DISMUTASE"/>
    <property type="match status" value="1"/>
</dbReference>
<dbReference type="PANTHER" id="PTHR42769:SF3">
    <property type="entry name" value="SUPEROXIDE DISMUTASE [FE] 2, CHLOROPLASTIC"/>
    <property type="match status" value="1"/>
</dbReference>
<dbReference type="Pfam" id="PF02777">
    <property type="entry name" value="Sod_Fe_C"/>
    <property type="match status" value="1"/>
</dbReference>
<dbReference type="Pfam" id="PF00081">
    <property type="entry name" value="Sod_Fe_N"/>
    <property type="match status" value="1"/>
</dbReference>
<dbReference type="PIRSF" id="PIRSF000349">
    <property type="entry name" value="SODismutase"/>
    <property type="match status" value="1"/>
</dbReference>
<dbReference type="PRINTS" id="PR01703">
    <property type="entry name" value="MNSODISMTASE"/>
</dbReference>
<dbReference type="SUPFAM" id="SSF54719">
    <property type="entry name" value="Fe,Mn superoxide dismutase (SOD), C-terminal domain"/>
    <property type="match status" value="1"/>
</dbReference>
<dbReference type="SUPFAM" id="SSF46609">
    <property type="entry name" value="Fe,Mn superoxide dismutase (SOD), N-terminal domain"/>
    <property type="match status" value="1"/>
</dbReference>
<dbReference type="PROSITE" id="PS00088">
    <property type="entry name" value="SOD_MN"/>
    <property type="match status" value="1"/>
</dbReference>
<reference key="1">
    <citation type="journal article" date="2001" name="Nature">
        <title>Complete genome sequence of Salmonella enterica serovar Typhimurium LT2.</title>
        <authorList>
            <person name="McClelland M."/>
            <person name="Sanderson K.E."/>
            <person name="Spieth J."/>
            <person name="Clifton S.W."/>
            <person name="Latreille P."/>
            <person name="Courtney L."/>
            <person name="Porwollik S."/>
            <person name="Ali J."/>
            <person name="Dante M."/>
            <person name="Du F."/>
            <person name="Hou S."/>
            <person name="Layman D."/>
            <person name="Leonard S."/>
            <person name="Nguyen C."/>
            <person name="Scott K."/>
            <person name="Holmes A."/>
            <person name="Grewal N."/>
            <person name="Mulvaney E."/>
            <person name="Ryan E."/>
            <person name="Sun H."/>
            <person name="Florea L."/>
            <person name="Miller W."/>
            <person name="Stoneking T."/>
            <person name="Nhan M."/>
            <person name="Waterston R."/>
            <person name="Wilson R.K."/>
        </authorList>
    </citation>
    <scope>NUCLEOTIDE SEQUENCE [LARGE SCALE GENOMIC DNA]</scope>
    <source>
        <strain>LT2 / SGSC1412 / ATCC 700720</strain>
    </source>
</reference>
<reference key="2">
    <citation type="submission" date="1994-05" db="EMBL/GenBank/DDBJ databases">
        <title>Cloning and sequence analysis of Salmonella typhimurium iron superoxide dismutase promoter.</title>
        <authorList>
            <person name="Cheung M.W."/>
            <person name="Wong K.K."/>
            <person name="Kwan H.S."/>
        </authorList>
    </citation>
    <scope>NUCLEOTIDE SEQUENCE [GENOMIC DNA] OF 1-56</scope>
    <source>
        <strain>LT2</strain>
    </source>
</reference>
<protein>
    <recommendedName>
        <fullName>Superoxide dismutase [Fe]</fullName>
        <ecNumber>1.15.1.1</ecNumber>
    </recommendedName>
</protein>
<feature type="initiator methionine" description="Removed" evidence="1">
    <location>
        <position position="1"/>
    </location>
</feature>
<feature type="chain" id="PRO_0000159983" description="Superoxide dismutase [Fe]">
    <location>
        <begin position="2"/>
        <end position="193"/>
    </location>
</feature>
<feature type="binding site" evidence="1">
    <location>
        <position position="27"/>
    </location>
    <ligand>
        <name>Fe cation</name>
        <dbReference type="ChEBI" id="CHEBI:24875"/>
    </ligand>
</feature>
<feature type="binding site" evidence="1">
    <location>
        <position position="74"/>
    </location>
    <ligand>
        <name>Fe cation</name>
        <dbReference type="ChEBI" id="CHEBI:24875"/>
    </ligand>
</feature>
<feature type="binding site" evidence="1">
    <location>
        <position position="157"/>
    </location>
    <ligand>
        <name>Fe cation</name>
        <dbReference type="ChEBI" id="CHEBI:24875"/>
    </ligand>
</feature>
<feature type="binding site" evidence="1">
    <location>
        <position position="161"/>
    </location>
    <ligand>
        <name>Fe cation</name>
        <dbReference type="ChEBI" id="CHEBI:24875"/>
    </ligand>
</feature>
<feature type="sequence conflict" description="In Ref. 2; AAA56997." evidence="2" ref="2">
    <original>K</original>
    <variation>E</variation>
    <location>
        <position position="51"/>
    </location>
</feature>
<organism>
    <name type="scientific">Salmonella typhimurium (strain LT2 / SGSC1412 / ATCC 700720)</name>
    <dbReference type="NCBI Taxonomy" id="99287"/>
    <lineage>
        <taxon>Bacteria</taxon>
        <taxon>Pseudomonadati</taxon>
        <taxon>Pseudomonadota</taxon>
        <taxon>Gammaproteobacteria</taxon>
        <taxon>Enterobacterales</taxon>
        <taxon>Enterobacteriaceae</taxon>
        <taxon>Salmonella</taxon>
    </lineage>
</organism>